<gene>
    <name evidence="1" type="primary">psaB</name>
    <name type="ORF">JNC0399</name>
</gene>
<sequence>MALRFPRFSQGLAQDPTTRRIWFGIATAHDFESHDDITEERLYQNIFASHFGQLAIIFLWTSGNLFHVAWQGNFESWVQDPLHVRPIAHAIWDPHFGQPAVEAFTRGGSLGPVNIAYSGVYQWWYTIGLRTNEDLYTGALFLLFLSAISLLAGWFHLQPKWKPSVSWFKNAESRLNHHLSGLFGVSSLAWTGHLVHVAIPGSRGEYVRWNNFLEVLPHPQGLGPLFTGQWNLYAQNPDSSSHLFGTSQGAGTAVLTLLGGFHPQTQSLWLTDIAHHHLAIAFIFLVAGHMYRTNFGIGHSIKDLLDAHIPPGGRLGRGHKGLYDTINNSLHFQLGLALASLGVITSLVAQHMYSLPAYAFIAQDFTTQAALYTHHQYIAGFIMTGAFAHGAIFFIRDYNPEQNEDNVLARMLDHKEAIISHLSWASLFLGFHTLGLYVHNDVMLAFGTPEKQILIEPIFAQWIQSAHGKTSYGFDVLLSSTSGPAFNAGRNIWLPGWLNAINENSNSLFLTIGPGDFLVHHAIALGLHTTTLILVKGALDARGSKLMPDKKDFGYSFPCDGPGRGGTCDISAWDAFYLAVFWMLNTIGWVTFYWHWKHITLWQGNVSQFNESSTYLMGWLRDYLWLNSSQLINGYNPFGMNSLSVWAWMFLFGHLVWATGFMFLIFWRGYWQELIETLAWAHERTPLANLIRWRDKPVALSIVQARLVGLAHFSVGYIFTYAAFLIASTSGKFG</sequence>
<evidence type="ECO:0000255" key="1">
    <source>
        <dbReference type="HAMAP-Rule" id="MF_00482"/>
    </source>
</evidence>
<geneLocation type="chloroplast"/>
<accession>Q06RD2</accession>
<organism>
    <name type="scientific">Jasminum nudiflorum</name>
    <name type="common">Winter jasmine</name>
    <dbReference type="NCBI Taxonomy" id="126431"/>
    <lineage>
        <taxon>Eukaryota</taxon>
        <taxon>Viridiplantae</taxon>
        <taxon>Streptophyta</taxon>
        <taxon>Embryophyta</taxon>
        <taxon>Tracheophyta</taxon>
        <taxon>Spermatophyta</taxon>
        <taxon>Magnoliopsida</taxon>
        <taxon>eudicotyledons</taxon>
        <taxon>Gunneridae</taxon>
        <taxon>Pentapetalae</taxon>
        <taxon>asterids</taxon>
        <taxon>lamiids</taxon>
        <taxon>Lamiales</taxon>
        <taxon>Oleaceae</taxon>
        <taxon>Jasmineae</taxon>
        <taxon>Jasminum</taxon>
    </lineage>
</organism>
<comment type="function">
    <text evidence="1">PsaA and PsaB bind P700, the primary electron donor of photosystem I (PSI), as well as the electron acceptors A0, A1 and FX. PSI is a plastocyanin-ferredoxin oxidoreductase, converting photonic excitation into a charge separation, which transfers an electron from the donor P700 chlorophyll pair to the spectroscopically characterized acceptors A0, A1, FX, FA and FB in turn. Oxidized P700 is reduced on the lumenal side of the thylakoid membrane by plastocyanin.</text>
</comment>
<comment type="catalytic activity">
    <reaction evidence="1">
        <text>reduced [plastocyanin] + hnu + oxidized [2Fe-2S]-[ferredoxin] = oxidized [plastocyanin] + reduced [2Fe-2S]-[ferredoxin]</text>
        <dbReference type="Rhea" id="RHEA:30407"/>
        <dbReference type="Rhea" id="RHEA-COMP:10000"/>
        <dbReference type="Rhea" id="RHEA-COMP:10001"/>
        <dbReference type="Rhea" id="RHEA-COMP:10039"/>
        <dbReference type="Rhea" id="RHEA-COMP:10040"/>
        <dbReference type="ChEBI" id="CHEBI:29036"/>
        <dbReference type="ChEBI" id="CHEBI:30212"/>
        <dbReference type="ChEBI" id="CHEBI:33737"/>
        <dbReference type="ChEBI" id="CHEBI:33738"/>
        <dbReference type="ChEBI" id="CHEBI:49552"/>
        <dbReference type="EC" id="1.97.1.12"/>
    </reaction>
</comment>
<comment type="cofactor">
    <text evidence="1">P700 is a chlorophyll a/chlorophyll a' dimer, A0 is one or more chlorophyll a, A1 is one or both phylloquinones and FX is a shared 4Fe-4S iron-sulfur center.</text>
</comment>
<comment type="subunit">
    <text evidence="1">The PsaA/B heterodimer binds the P700 chlorophyll special pair and subsequent electron acceptors. PSI consists of a core antenna complex that captures photons, and an electron transfer chain that converts photonic excitation into a charge separation. The eukaryotic PSI reaction center is composed of at least 11 subunits.</text>
</comment>
<comment type="subcellular location">
    <subcellularLocation>
        <location>Plastid</location>
        <location>Chloroplast thylakoid membrane</location>
        <topology>Multi-pass membrane protein</topology>
    </subcellularLocation>
</comment>
<comment type="similarity">
    <text evidence="1">Belongs to the PsaA/PsaB family.</text>
</comment>
<reference key="1">
    <citation type="journal article" date="2007" name="Mol. Biol. Evol.">
        <title>Gene relocations within chloroplast genomes of Jasminum and Menodora (Oleaceae) are due to multiple, overlapping inversions.</title>
        <authorList>
            <person name="Lee H.-L."/>
            <person name="Jansen R.K."/>
            <person name="Chumley T.W."/>
            <person name="Kim K.-J."/>
        </authorList>
    </citation>
    <scope>NUCLEOTIDE SEQUENCE [LARGE SCALE GENOMIC DNA]</scope>
</reference>
<name>PSAB_JASNU</name>
<feature type="chain" id="PRO_0000277118" description="Photosystem I P700 chlorophyll a apoprotein A2">
    <location>
        <begin position="1"/>
        <end position="734"/>
    </location>
</feature>
<feature type="transmembrane region" description="Helical; Name=I" evidence="1">
    <location>
        <begin position="46"/>
        <end position="69"/>
    </location>
</feature>
<feature type="transmembrane region" description="Helical; Name=II" evidence="1">
    <location>
        <begin position="135"/>
        <end position="158"/>
    </location>
</feature>
<feature type="transmembrane region" description="Helical; Name=III" evidence="1">
    <location>
        <begin position="175"/>
        <end position="199"/>
    </location>
</feature>
<feature type="transmembrane region" description="Helical; Name=IV" evidence="1">
    <location>
        <begin position="273"/>
        <end position="291"/>
    </location>
</feature>
<feature type="transmembrane region" description="Helical; Name=V" evidence="1">
    <location>
        <begin position="330"/>
        <end position="353"/>
    </location>
</feature>
<feature type="transmembrane region" description="Helical; Name=VI" evidence="1">
    <location>
        <begin position="369"/>
        <end position="395"/>
    </location>
</feature>
<feature type="transmembrane region" description="Helical; Name=VII" evidence="1">
    <location>
        <begin position="417"/>
        <end position="439"/>
    </location>
</feature>
<feature type="transmembrane region" description="Helical; Name=VIII" evidence="1">
    <location>
        <begin position="517"/>
        <end position="535"/>
    </location>
</feature>
<feature type="transmembrane region" description="Helical; Name=IX" evidence="1">
    <location>
        <begin position="575"/>
        <end position="596"/>
    </location>
</feature>
<feature type="transmembrane region" description="Helical; Name=X" evidence="1">
    <location>
        <begin position="643"/>
        <end position="665"/>
    </location>
</feature>
<feature type="transmembrane region" description="Helical; Name=XI" evidence="1">
    <location>
        <begin position="707"/>
        <end position="727"/>
    </location>
</feature>
<feature type="binding site" evidence="1">
    <location>
        <position position="559"/>
    </location>
    <ligand>
        <name>[4Fe-4S] cluster</name>
        <dbReference type="ChEBI" id="CHEBI:49883"/>
        <note>ligand shared between dimeric partners</note>
    </ligand>
</feature>
<feature type="binding site" evidence="1">
    <location>
        <position position="568"/>
    </location>
    <ligand>
        <name>[4Fe-4S] cluster</name>
        <dbReference type="ChEBI" id="CHEBI:49883"/>
        <note>ligand shared between dimeric partners</note>
    </ligand>
</feature>
<feature type="binding site" description="axial binding residue" evidence="1">
    <location>
        <position position="654"/>
    </location>
    <ligand>
        <name>chlorophyll a</name>
        <dbReference type="ChEBI" id="CHEBI:58416"/>
        <label>B1</label>
    </ligand>
    <ligandPart>
        <name>Mg</name>
        <dbReference type="ChEBI" id="CHEBI:25107"/>
    </ligandPart>
</feature>
<feature type="binding site" description="axial binding residue" evidence="1">
    <location>
        <position position="662"/>
    </location>
    <ligand>
        <name>chlorophyll a</name>
        <dbReference type="ChEBI" id="CHEBI:58416"/>
        <label>B3</label>
    </ligand>
    <ligandPart>
        <name>Mg</name>
        <dbReference type="ChEBI" id="CHEBI:25107"/>
    </ligandPart>
</feature>
<feature type="binding site" evidence="1">
    <location>
        <position position="670"/>
    </location>
    <ligand>
        <name>chlorophyll a</name>
        <dbReference type="ChEBI" id="CHEBI:58416"/>
        <label>B3</label>
    </ligand>
</feature>
<feature type="binding site" evidence="1">
    <location>
        <position position="671"/>
    </location>
    <ligand>
        <name>phylloquinone</name>
        <dbReference type="ChEBI" id="CHEBI:18067"/>
        <label>B</label>
    </ligand>
</feature>
<protein>
    <recommendedName>
        <fullName evidence="1">Photosystem I P700 chlorophyll a apoprotein A2</fullName>
        <ecNumber evidence="1">1.97.1.12</ecNumber>
    </recommendedName>
    <alternativeName>
        <fullName evidence="1">PSI-B</fullName>
    </alternativeName>
    <alternativeName>
        <fullName evidence="1">PsaB</fullName>
    </alternativeName>
</protein>
<dbReference type="EC" id="1.97.1.12" evidence="1"/>
<dbReference type="EMBL" id="DQ673255">
    <property type="protein sequence ID" value="ABG74627.1"/>
    <property type="molecule type" value="Genomic_DNA"/>
</dbReference>
<dbReference type="RefSeq" id="YP_778489.1">
    <property type="nucleotide sequence ID" value="NC_008407.1"/>
</dbReference>
<dbReference type="SMR" id="Q06RD2"/>
<dbReference type="GeneID" id="4319822"/>
<dbReference type="GO" id="GO:0009535">
    <property type="term" value="C:chloroplast thylakoid membrane"/>
    <property type="evidence" value="ECO:0007669"/>
    <property type="project" value="UniProtKB-SubCell"/>
</dbReference>
<dbReference type="GO" id="GO:0009522">
    <property type="term" value="C:photosystem I"/>
    <property type="evidence" value="ECO:0007669"/>
    <property type="project" value="UniProtKB-KW"/>
</dbReference>
<dbReference type="GO" id="GO:0051539">
    <property type="term" value="F:4 iron, 4 sulfur cluster binding"/>
    <property type="evidence" value="ECO:0007669"/>
    <property type="project" value="UniProtKB-KW"/>
</dbReference>
<dbReference type="GO" id="GO:0016168">
    <property type="term" value="F:chlorophyll binding"/>
    <property type="evidence" value="ECO:0007669"/>
    <property type="project" value="UniProtKB-KW"/>
</dbReference>
<dbReference type="GO" id="GO:0009055">
    <property type="term" value="F:electron transfer activity"/>
    <property type="evidence" value="ECO:0007669"/>
    <property type="project" value="UniProtKB-UniRule"/>
</dbReference>
<dbReference type="GO" id="GO:0000287">
    <property type="term" value="F:magnesium ion binding"/>
    <property type="evidence" value="ECO:0007669"/>
    <property type="project" value="UniProtKB-UniRule"/>
</dbReference>
<dbReference type="GO" id="GO:0016491">
    <property type="term" value="F:oxidoreductase activity"/>
    <property type="evidence" value="ECO:0007669"/>
    <property type="project" value="UniProtKB-KW"/>
</dbReference>
<dbReference type="GO" id="GO:0015979">
    <property type="term" value="P:photosynthesis"/>
    <property type="evidence" value="ECO:0007669"/>
    <property type="project" value="UniProtKB-UniRule"/>
</dbReference>
<dbReference type="FunFam" id="1.20.1130.10:FF:000001">
    <property type="entry name" value="Photosystem I P700 chlorophyll a apoprotein A2"/>
    <property type="match status" value="1"/>
</dbReference>
<dbReference type="Gene3D" id="1.20.1130.10">
    <property type="entry name" value="Photosystem I PsaA/PsaB"/>
    <property type="match status" value="1"/>
</dbReference>
<dbReference type="HAMAP" id="MF_00482">
    <property type="entry name" value="PSI_PsaB"/>
    <property type="match status" value="1"/>
</dbReference>
<dbReference type="InterPro" id="IPR001280">
    <property type="entry name" value="PSI_PsaA/B"/>
</dbReference>
<dbReference type="InterPro" id="IPR020586">
    <property type="entry name" value="PSI_PsaA/B_CS"/>
</dbReference>
<dbReference type="InterPro" id="IPR036408">
    <property type="entry name" value="PSI_PsaA/B_sf"/>
</dbReference>
<dbReference type="InterPro" id="IPR006244">
    <property type="entry name" value="PSI_PsaB"/>
</dbReference>
<dbReference type="NCBIfam" id="TIGR01336">
    <property type="entry name" value="psaB"/>
    <property type="match status" value="1"/>
</dbReference>
<dbReference type="PANTHER" id="PTHR30128">
    <property type="entry name" value="OUTER MEMBRANE PROTEIN, OMPA-RELATED"/>
    <property type="match status" value="1"/>
</dbReference>
<dbReference type="PANTHER" id="PTHR30128:SF19">
    <property type="entry name" value="PHOTOSYSTEM I P700 CHLOROPHYLL A APOPROTEIN A1-RELATED"/>
    <property type="match status" value="1"/>
</dbReference>
<dbReference type="Pfam" id="PF00223">
    <property type="entry name" value="PsaA_PsaB"/>
    <property type="match status" value="1"/>
</dbReference>
<dbReference type="PIRSF" id="PIRSF002905">
    <property type="entry name" value="PSI_A"/>
    <property type="match status" value="1"/>
</dbReference>
<dbReference type="PRINTS" id="PR00257">
    <property type="entry name" value="PHOTSYSPSAAB"/>
</dbReference>
<dbReference type="SUPFAM" id="SSF81558">
    <property type="entry name" value="Photosystem I subunits PsaA/PsaB"/>
    <property type="match status" value="1"/>
</dbReference>
<dbReference type="PROSITE" id="PS00419">
    <property type="entry name" value="PHOTOSYSTEM_I_PSAAB"/>
    <property type="match status" value="1"/>
</dbReference>
<proteinExistence type="inferred from homology"/>
<keyword id="KW-0004">4Fe-4S</keyword>
<keyword id="KW-0148">Chlorophyll</keyword>
<keyword id="KW-0150">Chloroplast</keyword>
<keyword id="KW-0157">Chromophore</keyword>
<keyword id="KW-0249">Electron transport</keyword>
<keyword id="KW-0408">Iron</keyword>
<keyword id="KW-0411">Iron-sulfur</keyword>
<keyword id="KW-0460">Magnesium</keyword>
<keyword id="KW-0472">Membrane</keyword>
<keyword id="KW-0479">Metal-binding</keyword>
<keyword id="KW-0560">Oxidoreductase</keyword>
<keyword id="KW-0602">Photosynthesis</keyword>
<keyword id="KW-0603">Photosystem I</keyword>
<keyword id="KW-0934">Plastid</keyword>
<keyword id="KW-0793">Thylakoid</keyword>
<keyword id="KW-0812">Transmembrane</keyword>
<keyword id="KW-1133">Transmembrane helix</keyword>
<keyword id="KW-0813">Transport</keyword>